<reference key="1">
    <citation type="journal article" date="1996" name="J. Bacteriol.">
        <title>Organization, transcription, and expression of the 5' region of the fla operon of Treponema phagedenis and Treponema pallidum.</title>
        <authorList>
            <person name="Limberger R.J."/>
            <person name="Slivienski L.L."/>
            <person name="El-Afandi M.C.T."/>
            <person name="Dantuono L.A."/>
        </authorList>
    </citation>
    <scope>NUCLEOTIDE SEQUENCE [GENOMIC DNA]</scope>
</reference>
<reference key="2">
    <citation type="journal article" date="1998" name="Science">
        <title>Complete genome sequence of Treponema pallidum, the syphilis spirochete.</title>
        <authorList>
            <person name="Fraser C.M."/>
            <person name="Norris S.J."/>
            <person name="Weinstock G.M."/>
            <person name="White O."/>
            <person name="Sutton G.G."/>
            <person name="Dodson R.J."/>
            <person name="Gwinn M.L."/>
            <person name="Hickey E.K."/>
            <person name="Clayton R.A."/>
            <person name="Ketchum K.A."/>
            <person name="Sodergren E."/>
            <person name="Hardham J.M."/>
            <person name="McLeod M.P."/>
            <person name="Salzberg S.L."/>
            <person name="Peterson J.D."/>
            <person name="Khalak H.G."/>
            <person name="Richardson D.L."/>
            <person name="Howell J.K."/>
            <person name="Chidambaram M."/>
            <person name="Utterback T.R."/>
            <person name="McDonald L.A."/>
            <person name="Artiach P."/>
            <person name="Bowman C."/>
            <person name="Cotton M.D."/>
            <person name="Fujii C."/>
            <person name="Garland S.A."/>
            <person name="Hatch B."/>
            <person name="Horst K."/>
            <person name="Roberts K.M."/>
            <person name="Sandusky M."/>
            <person name="Weidman J.F."/>
            <person name="Smith H.O."/>
            <person name="Venter J.C."/>
        </authorList>
    </citation>
    <scope>NUCLEOTIDE SEQUENCE [LARGE SCALE GENOMIC DNA]</scope>
    <source>
        <strain>Nichols</strain>
    </source>
</reference>
<reference key="3">
    <citation type="journal article" date="1995" name="Gene">
        <title>Identification and sequences of the Treponema pallidum fliM', fliY, fliP, fliQ, fliR and flhB' genes.</title>
        <authorList>
            <person name="Hardham J.M."/>
            <person name="Frye J.G."/>
            <person name="Stamm L.V."/>
        </authorList>
    </citation>
    <scope>NUCLEOTIDE SEQUENCE [GENOMIC DNA] OF 190-344</scope>
    <source>
        <strain>Nichols</strain>
    </source>
</reference>
<proteinExistence type="inferred from homology"/>
<accession>P74927</accession>
<keyword id="KW-0975">Bacterial flagellum</keyword>
<keyword id="KW-0997">Cell inner membrane</keyword>
<keyword id="KW-1003">Cell membrane</keyword>
<keyword id="KW-0145">Chemotaxis</keyword>
<keyword id="KW-0283">Flagellar rotation</keyword>
<keyword id="KW-0472">Membrane</keyword>
<keyword id="KW-1185">Reference proteome</keyword>
<evidence type="ECO:0000250" key="1"/>
<evidence type="ECO:0000305" key="2"/>
<organism>
    <name type="scientific">Treponema pallidum (strain Nichols)</name>
    <dbReference type="NCBI Taxonomy" id="243276"/>
    <lineage>
        <taxon>Bacteria</taxon>
        <taxon>Pseudomonadati</taxon>
        <taxon>Spirochaetota</taxon>
        <taxon>Spirochaetia</taxon>
        <taxon>Spirochaetales</taxon>
        <taxon>Treponemataceae</taxon>
        <taxon>Treponema</taxon>
    </lineage>
</organism>
<dbReference type="EMBL" id="U28219">
    <property type="protein sequence ID" value="AAB61256.1"/>
    <property type="molecule type" value="Genomic_DNA"/>
</dbReference>
<dbReference type="EMBL" id="AE000520">
    <property type="protein sequence ID" value="AAC65687.1"/>
    <property type="molecule type" value="Genomic_DNA"/>
</dbReference>
<dbReference type="EMBL" id="U36839">
    <property type="protein sequence ID" value="AAB00543.1"/>
    <property type="molecule type" value="Genomic_DNA"/>
</dbReference>
<dbReference type="PIR" id="E71291">
    <property type="entry name" value="E71291"/>
</dbReference>
<dbReference type="RefSeq" id="WP_010882166.1">
    <property type="nucleotide sequence ID" value="NC_021490.2"/>
</dbReference>
<dbReference type="SMR" id="P74927"/>
<dbReference type="IntAct" id="P74927">
    <property type="interactions" value="4"/>
</dbReference>
<dbReference type="STRING" id="243276.TP_0721"/>
<dbReference type="EnsemblBacteria" id="AAC65687">
    <property type="protein sequence ID" value="AAC65687"/>
    <property type="gene ID" value="TP_0721"/>
</dbReference>
<dbReference type="GeneID" id="93876490"/>
<dbReference type="KEGG" id="tpa:TP_0721"/>
<dbReference type="KEGG" id="tpw:TPANIC_0721"/>
<dbReference type="eggNOG" id="COG1868">
    <property type="taxonomic scope" value="Bacteria"/>
</dbReference>
<dbReference type="HOGENOM" id="CLU_052646_0_0_12"/>
<dbReference type="OrthoDB" id="9806941at2"/>
<dbReference type="Proteomes" id="UP000000811">
    <property type="component" value="Chromosome"/>
</dbReference>
<dbReference type="GO" id="GO:0009425">
    <property type="term" value="C:bacterial-type flagellum basal body"/>
    <property type="evidence" value="ECO:0007669"/>
    <property type="project" value="UniProtKB-SubCell"/>
</dbReference>
<dbReference type="GO" id="GO:0005886">
    <property type="term" value="C:plasma membrane"/>
    <property type="evidence" value="ECO:0007669"/>
    <property type="project" value="UniProtKB-SubCell"/>
</dbReference>
<dbReference type="GO" id="GO:0003774">
    <property type="term" value="F:cytoskeletal motor activity"/>
    <property type="evidence" value="ECO:0007669"/>
    <property type="project" value="InterPro"/>
</dbReference>
<dbReference type="GO" id="GO:0071978">
    <property type="term" value="P:bacterial-type flagellum-dependent swarming motility"/>
    <property type="evidence" value="ECO:0007669"/>
    <property type="project" value="TreeGrafter"/>
</dbReference>
<dbReference type="GO" id="GO:0050918">
    <property type="term" value="P:positive chemotaxis"/>
    <property type="evidence" value="ECO:0007669"/>
    <property type="project" value="TreeGrafter"/>
</dbReference>
<dbReference type="CDD" id="cd17908">
    <property type="entry name" value="FliM"/>
    <property type="match status" value="1"/>
</dbReference>
<dbReference type="Gene3D" id="3.40.1550.10">
    <property type="entry name" value="CheC-like"/>
    <property type="match status" value="1"/>
</dbReference>
<dbReference type="Gene3D" id="2.30.330.10">
    <property type="entry name" value="SpoA-like"/>
    <property type="match status" value="1"/>
</dbReference>
<dbReference type="InterPro" id="IPR028976">
    <property type="entry name" value="CheC-like_sf"/>
</dbReference>
<dbReference type="InterPro" id="IPR001689">
    <property type="entry name" value="Flag_FliM"/>
</dbReference>
<dbReference type="InterPro" id="IPR001543">
    <property type="entry name" value="FliN-like_C"/>
</dbReference>
<dbReference type="InterPro" id="IPR036429">
    <property type="entry name" value="SpoA-like_sf"/>
</dbReference>
<dbReference type="NCBIfam" id="TIGR01397">
    <property type="entry name" value="fliM_switch"/>
    <property type="match status" value="1"/>
</dbReference>
<dbReference type="PANTHER" id="PTHR30034">
    <property type="entry name" value="FLAGELLAR MOTOR SWITCH PROTEIN FLIM"/>
    <property type="match status" value="1"/>
</dbReference>
<dbReference type="PANTHER" id="PTHR30034:SF6">
    <property type="entry name" value="YOP PROTEINS TRANSLOCATION PROTEIN Q"/>
    <property type="match status" value="1"/>
</dbReference>
<dbReference type="Pfam" id="PF02154">
    <property type="entry name" value="FliM"/>
    <property type="match status" value="1"/>
</dbReference>
<dbReference type="Pfam" id="PF01052">
    <property type="entry name" value="FliMN_C"/>
    <property type="match status" value="1"/>
</dbReference>
<dbReference type="PIRSF" id="PIRSF002888">
    <property type="entry name" value="FliM"/>
    <property type="match status" value="1"/>
</dbReference>
<dbReference type="PRINTS" id="PR00955">
    <property type="entry name" value="FLGMOTORFLIM"/>
</dbReference>
<dbReference type="SUPFAM" id="SSF103039">
    <property type="entry name" value="CheC-like"/>
    <property type="match status" value="1"/>
</dbReference>
<dbReference type="SUPFAM" id="SSF101801">
    <property type="entry name" value="Surface presentation of antigens (SPOA)"/>
    <property type="match status" value="1"/>
</dbReference>
<name>FLIM_TREPA</name>
<sequence length="344" mass="38553">MTEVLSQDEIDQLLTAISSGDASIEDARPISDTRKITLYDFRRPDKFSKEQMRTLSLMHETFARLTTTSLSAQLRSMVHVHVASVDQLTYEEFIRSIPTPSTLAVITMDPLKGNAVLEVDPSITFSIIDRLFGGTGQAAKVQRDLTDIENSVMEGVIVRILANVRESWTQVIDLRPRLGQIETNPQFAQIVPPSEMVVLVTLETKVGEEEGMMNFCIPYITIEPIISKLSSQFWFSSVRRSSTTQYMGVLRDKLSTVDMDVVAEVGSLRLSVRDILGLRVGDIIRLHDTHVGDPFVLSIGNRKKFLCQPGVVGKKIAAQILERIESTSQEDFEELSADEEELYE</sequence>
<comment type="function">
    <text evidence="1">FliM is one of three proteins (FliG, FliN, FliM) that forms the rotor-mounted switch complex (C ring), located at the base of the basal body. This complex interacts with the CheY and CheZ chemotaxis proteins, in addition to contacting components of the motor that determine the direction of flagellar rotation (By similarity).</text>
</comment>
<comment type="subcellular location">
    <subcellularLocation>
        <location evidence="1">Cell inner membrane</location>
        <topology evidence="1">Peripheral membrane protein</topology>
    </subcellularLocation>
    <subcellularLocation>
        <location evidence="1">Bacterial flagellum basal body</location>
    </subcellularLocation>
</comment>
<comment type="similarity">
    <text evidence="2">Belongs to the FliM family.</text>
</comment>
<feature type="chain" id="PRO_0000180932" description="Flagellar motor switch protein FliM">
    <location>
        <begin position="1"/>
        <end position="344"/>
    </location>
</feature>
<protein>
    <recommendedName>
        <fullName>Flagellar motor switch protein FliM</fullName>
    </recommendedName>
</protein>
<gene>
    <name type="primary">fliM</name>
    <name type="ordered locus">TP_0721</name>
</gene>